<organism>
    <name type="scientific">Drosophila melanogaster</name>
    <name type="common">Fruit fly</name>
    <dbReference type="NCBI Taxonomy" id="7227"/>
    <lineage>
        <taxon>Eukaryota</taxon>
        <taxon>Metazoa</taxon>
        <taxon>Ecdysozoa</taxon>
        <taxon>Arthropoda</taxon>
        <taxon>Hexapoda</taxon>
        <taxon>Insecta</taxon>
        <taxon>Pterygota</taxon>
        <taxon>Neoptera</taxon>
        <taxon>Endopterygota</taxon>
        <taxon>Diptera</taxon>
        <taxon>Brachycera</taxon>
        <taxon>Muscomorpha</taxon>
        <taxon>Ephydroidea</taxon>
        <taxon>Drosophilidae</taxon>
        <taxon>Drosophila</taxon>
        <taxon>Sophophora</taxon>
    </lineage>
</organism>
<name>ATPK_DROME</name>
<proteinExistence type="inferred from homology"/>
<sequence>MAFGDYPAEYNPKVHGPYDPARFYGKADVPFGQVKLGEIGAWLGRRNKTPNAVAGAVSRAWWRWQHKYVFPKRAGIAPFFQLTVASMTFFYLINYTKLKHHRNYKYH</sequence>
<evidence type="ECO:0000250" key="1"/>
<evidence type="ECO:0000303" key="2">
    <source ref="4"/>
</evidence>
<evidence type="ECO:0000305" key="3"/>
<evidence type="ECO:0000312" key="4">
    <source>
        <dbReference type="FlyBase" id="FBgn0035032"/>
    </source>
</evidence>
<feature type="chain" id="PRO_0000194829" description="Putative ATP synthase subunit f, mitochondrial">
    <location>
        <begin position="1"/>
        <end position="107"/>
    </location>
</feature>
<feature type="splice variant" id="VSP_026521" description="In isoform B." evidence="2">
    <original>KYH</original>
    <variation>NTTKGRCPVVLHLQQILHFPQGVREAGNHH</variation>
    <location>
        <begin position="105"/>
        <end position="107"/>
    </location>
</feature>
<accession>Q9W141</accession>
<accession>A4VCL5</accession>
<accession>Q0E8W4</accession>
<accession>Q1ECC6</accession>
<gene>
    <name evidence="4" type="primary">ATPsynF</name>
    <name evidence="4" type="ORF">CG4692</name>
</gene>
<reference key="1">
    <citation type="journal article" date="2000" name="Science">
        <title>The genome sequence of Drosophila melanogaster.</title>
        <authorList>
            <person name="Adams M.D."/>
            <person name="Celniker S.E."/>
            <person name="Holt R.A."/>
            <person name="Evans C.A."/>
            <person name="Gocayne J.D."/>
            <person name="Amanatides P.G."/>
            <person name="Scherer S.E."/>
            <person name="Li P.W."/>
            <person name="Hoskins R.A."/>
            <person name="Galle R.F."/>
            <person name="George R.A."/>
            <person name="Lewis S.E."/>
            <person name="Richards S."/>
            <person name="Ashburner M."/>
            <person name="Henderson S.N."/>
            <person name="Sutton G.G."/>
            <person name="Wortman J.R."/>
            <person name="Yandell M.D."/>
            <person name="Zhang Q."/>
            <person name="Chen L.X."/>
            <person name="Brandon R.C."/>
            <person name="Rogers Y.-H.C."/>
            <person name="Blazej R.G."/>
            <person name="Champe M."/>
            <person name="Pfeiffer B.D."/>
            <person name="Wan K.H."/>
            <person name="Doyle C."/>
            <person name="Baxter E.G."/>
            <person name="Helt G."/>
            <person name="Nelson C.R."/>
            <person name="Miklos G.L.G."/>
            <person name="Abril J.F."/>
            <person name="Agbayani A."/>
            <person name="An H.-J."/>
            <person name="Andrews-Pfannkoch C."/>
            <person name="Baldwin D."/>
            <person name="Ballew R.M."/>
            <person name="Basu A."/>
            <person name="Baxendale J."/>
            <person name="Bayraktaroglu L."/>
            <person name="Beasley E.M."/>
            <person name="Beeson K.Y."/>
            <person name="Benos P.V."/>
            <person name="Berman B.P."/>
            <person name="Bhandari D."/>
            <person name="Bolshakov S."/>
            <person name="Borkova D."/>
            <person name="Botchan M.R."/>
            <person name="Bouck J."/>
            <person name="Brokstein P."/>
            <person name="Brottier P."/>
            <person name="Burtis K.C."/>
            <person name="Busam D.A."/>
            <person name="Butler H."/>
            <person name="Cadieu E."/>
            <person name="Center A."/>
            <person name="Chandra I."/>
            <person name="Cherry J.M."/>
            <person name="Cawley S."/>
            <person name="Dahlke C."/>
            <person name="Davenport L.B."/>
            <person name="Davies P."/>
            <person name="de Pablos B."/>
            <person name="Delcher A."/>
            <person name="Deng Z."/>
            <person name="Mays A.D."/>
            <person name="Dew I."/>
            <person name="Dietz S.M."/>
            <person name="Dodson K."/>
            <person name="Doup L.E."/>
            <person name="Downes M."/>
            <person name="Dugan-Rocha S."/>
            <person name="Dunkov B.C."/>
            <person name="Dunn P."/>
            <person name="Durbin K.J."/>
            <person name="Evangelista C.C."/>
            <person name="Ferraz C."/>
            <person name="Ferriera S."/>
            <person name="Fleischmann W."/>
            <person name="Fosler C."/>
            <person name="Gabrielian A.E."/>
            <person name="Garg N.S."/>
            <person name="Gelbart W.M."/>
            <person name="Glasser K."/>
            <person name="Glodek A."/>
            <person name="Gong F."/>
            <person name="Gorrell J.H."/>
            <person name="Gu Z."/>
            <person name="Guan P."/>
            <person name="Harris M."/>
            <person name="Harris N.L."/>
            <person name="Harvey D.A."/>
            <person name="Heiman T.J."/>
            <person name="Hernandez J.R."/>
            <person name="Houck J."/>
            <person name="Hostin D."/>
            <person name="Houston K.A."/>
            <person name="Howland T.J."/>
            <person name="Wei M.-H."/>
            <person name="Ibegwam C."/>
            <person name="Jalali M."/>
            <person name="Kalush F."/>
            <person name="Karpen G.H."/>
            <person name="Ke Z."/>
            <person name="Kennison J.A."/>
            <person name="Ketchum K.A."/>
            <person name="Kimmel B.E."/>
            <person name="Kodira C.D."/>
            <person name="Kraft C.L."/>
            <person name="Kravitz S."/>
            <person name="Kulp D."/>
            <person name="Lai Z."/>
            <person name="Lasko P."/>
            <person name="Lei Y."/>
            <person name="Levitsky A.A."/>
            <person name="Li J.H."/>
            <person name="Li Z."/>
            <person name="Liang Y."/>
            <person name="Lin X."/>
            <person name="Liu X."/>
            <person name="Mattei B."/>
            <person name="McIntosh T.C."/>
            <person name="McLeod M.P."/>
            <person name="McPherson D."/>
            <person name="Merkulov G."/>
            <person name="Milshina N.V."/>
            <person name="Mobarry C."/>
            <person name="Morris J."/>
            <person name="Moshrefi A."/>
            <person name="Mount S.M."/>
            <person name="Moy M."/>
            <person name="Murphy B."/>
            <person name="Murphy L."/>
            <person name="Muzny D.M."/>
            <person name="Nelson D.L."/>
            <person name="Nelson D.R."/>
            <person name="Nelson K.A."/>
            <person name="Nixon K."/>
            <person name="Nusskern D.R."/>
            <person name="Pacleb J.M."/>
            <person name="Palazzolo M."/>
            <person name="Pittman G.S."/>
            <person name="Pan S."/>
            <person name="Pollard J."/>
            <person name="Puri V."/>
            <person name="Reese M.G."/>
            <person name="Reinert K."/>
            <person name="Remington K."/>
            <person name="Saunders R.D.C."/>
            <person name="Scheeler F."/>
            <person name="Shen H."/>
            <person name="Shue B.C."/>
            <person name="Siden-Kiamos I."/>
            <person name="Simpson M."/>
            <person name="Skupski M.P."/>
            <person name="Smith T.J."/>
            <person name="Spier E."/>
            <person name="Spradling A.C."/>
            <person name="Stapleton M."/>
            <person name="Strong R."/>
            <person name="Sun E."/>
            <person name="Svirskas R."/>
            <person name="Tector C."/>
            <person name="Turner R."/>
            <person name="Venter E."/>
            <person name="Wang A.H."/>
            <person name="Wang X."/>
            <person name="Wang Z.-Y."/>
            <person name="Wassarman D.A."/>
            <person name="Weinstock G.M."/>
            <person name="Weissenbach J."/>
            <person name="Williams S.M."/>
            <person name="Woodage T."/>
            <person name="Worley K.C."/>
            <person name="Wu D."/>
            <person name="Yang S."/>
            <person name="Yao Q.A."/>
            <person name="Ye J."/>
            <person name="Yeh R.-F."/>
            <person name="Zaveri J.S."/>
            <person name="Zhan M."/>
            <person name="Zhang G."/>
            <person name="Zhao Q."/>
            <person name="Zheng L."/>
            <person name="Zheng X.H."/>
            <person name="Zhong F.N."/>
            <person name="Zhong W."/>
            <person name="Zhou X."/>
            <person name="Zhu S.C."/>
            <person name="Zhu X."/>
            <person name="Smith H.O."/>
            <person name="Gibbs R.A."/>
            <person name="Myers E.W."/>
            <person name="Rubin G.M."/>
            <person name="Venter J.C."/>
        </authorList>
    </citation>
    <scope>NUCLEOTIDE SEQUENCE [LARGE SCALE GENOMIC DNA]</scope>
    <source>
        <strain>Berkeley</strain>
    </source>
</reference>
<reference key="2">
    <citation type="journal article" date="2002" name="Genome Biol.">
        <title>Annotation of the Drosophila melanogaster euchromatic genome: a systematic review.</title>
        <authorList>
            <person name="Misra S."/>
            <person name="Crosby M.A."/>
            <person name="Mungall C.J."/>
            <person name="Matthews B.B."/>
            <person name="Campbell K.S."/>
            <person name="Hradecky P."/>
            <person name="Huang Y."/>
            <person name="Kaminker J.S."/>
            <person name="Millburn G.H."/>
            <person name="Prochnik S.E."/>
            <person name="Smith C.D."/>
            <person name="Tupy J.L."/>
            <person name="Whitfield E.J."/>
            <person name="Bayraktaroglu L."/>
            <person name="Berman B.P."/>
            <person name="Bettencourt B.R."/>
            <person name="Celniker S.E."/>
            <person name="de Grey A.D.N.J."/>
            <person name="Drysdale R.A."/>
            <person name="Harris N.L."/>
            <person name="Richter J."/>
            <person name="Russo S."/>
            <person name="Schroeder A.J."/>
            <person name="Shu S.Q."/>
            <person name="Stapleton M."/>
            <person name="Yamada C."/>
            <person name="Ashburner M."/>
            <person name="Gelbart W.M."/>
            <person name="Rubin G.M."/>
            <person name="Lewis S.E."/>
        </authorList>
    </citation>
    <scope>GENOME REANNOTATION</scope>
    <source>
        <strain>Berkeley</strain>
    </source>
</reference>
<reference key="3">
    <citation type="journal article" date="2002" name="Genome Biol.">
        <title>A Drosophila full-length cDNA resource.</title>
        <authorList>
            <person name="Stapleton M."/>
            <person name="Carlson J.W."/>
            <person name="Brokstein P."/>
            <person name="Yu C."/>
            <person name="Champe M."/>
            <person name="George R.A."/>
            <person name="Guarin H."/>
            <person name="Kronmiller B."/>
            <person name="Pacleb J.M."/>
            <person name="Park S."/>
            <person name="Wan K.H."/>
            <person name="Rubin G.M."/>
            <person name="Celniker S.E."/>
        </authorList>
    </citation>
    <scope>NUCLEOTIDE SEQUENCE [LARGE SCALE MRNA] (ISOFORM A)</scope>
    <source>
        <strain>Berkeley</strain>
        <tissue>Head</tissue>
    </source>
</reference>
<reference key="4">
    <citation type="submission" date="2007-04" db="EMBL/GenBank/DDBJ databases">
        <authorList>
            <person name="Stapleton M."/>
            <person name="Carlson J.W."/>
            <person name="Chavez C."/>
            <person name="Frise E."/>
            <person name="Kapadia B."/>
            <person name="George R.A."/>
            <person name="Pacleb J.M."/>
            <person name="Park S."/>
            <person name="Wan K.H."/>
            <person name="Yu C."/>
            <person name="Celniker S.E."/>
        </authorList>
    </citation>
    <scope>NUCLEOTIDE SEQUENCE [LARGE SCALE MRNA] (ISOFORMS A AND B)</scope>
    <source>
        <strain>Berkeley</strain>
        <tissue>Head</tissue>
    </source>
</reference>
<keyword id="KW-0025">Alternative splicing</keyword>
<keyword id="KW-0066">ATP synthesis</keyword>
<keyword id="KW-0138">CF(0)</keyword>
<keyword id="KW-0375">Hydrogen ion transport</keyword>
<keyword id="KW-0406">Ion transport</keyword>
<keyword id="KW-0472">Membrane</keyword>
<keyword id="KW-0496">Mitochondrion</keyword>
<keyword id="KW-1185">Reference proteome</keyword>
<keyword id="KW-0813">Transport</keyword>
<protein>
    <recommendedName>
        <fullName evidence="4">Putative ATP synthase subunit f, mitochondrial</fullName>
    </recommendedName>
</protein>
<dbReference type="EMBL" id="AE013599">
    <property type="protein sequence ID" value="AAM68322.1"/>
    <property type="molecule type" value="Genomic_DNA"/>
</dbReference>
<dbReference type="EMBL" id="AY060738">
    <property type="protein sequence ID" value="AAL28286.1"/>
    <property type="molecule type" value="mRNA"/>
</dbReference>
<dbReference type="EMBL" id="BT025808">
    <property type="protein sequence ID" value="ABF85708.1"/>
    <property type="status" value="ALT_INIT"/>
    <property type="molecule type" value="mRNA"/>
</dbReference>
<dbReference type="EMBL" id="BT030456">
    <property type="protein sequence ID" value="ABP87898.1"/>
    <property type="molecule type" value="mRNA"/>
</dbReference>
<dbReference type="RefSeq" id="NP_611940.1">
    <molecule id="Q9W141-1"/>
    <property type="nucleotide sequence ID" value="NM_138096.3"/>
</dbReference>
<dbReference type="RefSeq" id="NP_726463.1">
    <molecule id="Q9W141-1"/>
    <property type="nucleotide sequence ID" value="NM_166678.3"/>
</dbReference>
<dbReference type="SMR" id="Q9W141"/>
<dbReference type="BioGRID" id="63503">
    <property type="interactions" value="39"/>
</dbReference>
<dbReference type="ComplexPortal" id="CPX-8618">
    <property type="entry name" value="Mitochondrial proton-transporting ATP synthase complex"/>
</dbReference>
<dbReference type="ComplexPortal" id="CPX-8619">
    <property type="entry name" value="Mitochondrial proton-transporting ATP synthase complex, testis-specific variant"/>
</dbReference>
<dbReference type="DIP" id="DIP-21252N"/>
<dbReference type="FunCoup" id="Q9W141">
    <property type="interactions" value="627"/>
</dbReference>
<dbReference type="IntAct" id="Q9W141">
    <property type="interactions" value="62"/>
</dbReference>
<dbReference type="STRING" id="7227.FBpp0072247"/>
<dbReference type="PaxDb" id="7227-FBpp0072246"/>
<dbReference type="DNASU" id="37931"/>
<dbReference type="EnsemblMetazoa" id="FBtr0072339">
    <molecule id="Q9W141-1"/>
    <property type="protein sequence ID" value="FBpp0072246"/>
    <property type="gene ID" value="FBgn0035032"/>
</dbReference>
<dbReference type="EnsemblMetazoa" id="FBtr0072340">
    <molecule id="Q9W141-1"/>
    <property type="protein sequence ID" value="FBpp0072247"/>
    <property type="gene ID" value="FBgn0035032"/>
</dbReference>
<dbReference type="GeneID" id="37931"/>
<dbReference type="KEGG" id="dme:Dmel_CG4692"/>
<dbReference type="AGR" id="FB:FBgn0035032"/>
<dbReference type="CTD" id="37931"/>
<dbReference type="FlyBase" id="FBgn0035032">
    <property type="gene designation" value="ATPsynF"/>
</dbReference>
<dbReference type="VEuPathDB" id="VectorBase:FBgn0035032"/>
<dbReference type="eggNOG" id="KOG4092">
    <property type="taxonomic scope" value="Eukaryota"/>
</dbReference>
<dbReference type="GeneTree" id="ENSGT00940000175005"/>
<dbReference type="HOGENOM" id="CLU_156759_0_0_1"/>
<dbReference type="InParanoid" id="Q9W141"/>
<dbReference type="OMA" id="HKYVQPK"/>
<dbReference type="OrthoDB" id="8921675at2759"/>
<dbReference type="PhylomeDB" id="Q9W141"/>
<dbReference type="Reactome" id="R-DME-163210">
    <property type="pathway name" value="Formation of ATP by chemiosmotic coupling"/>
</dbReference>
<dbReference type="Reactome" id="R-DME-8949613">
    <property type="pathway name" value="Cristae formation"/>
</dbReference>
<dbReference type="BioGRID-ORCS" id="37931">
    <property type="hits" value="1 hit in 1 CRISPR screen"/>
</dbReference>
<dbReference type="ChiTaRS" id="ATPsynF">
    <property type="organism name" value="fly"/>
</dbReference>
<dbReference type="GenomeRNAi" id="37931"/>
<dbReference type="PRO" id="PR:Q9W141"/>
<dbReference type="Proteomes" id="UP000000803">
    <property type="component" value="Chromosome 2R"/>
</dbReference>
<dbReference type="Bgee" id="FBgn0035032">
    <property type="expression patterns" value="Expressed in adult hindgut (Drosophila) and 303 other cell types or tissues"/>
</dbReference>
<dbReference type="ExpressionAtlas" id="Q9W141">
    <property type="expression patterns" value="baseline and differential"/>
</dbReference>
<dbReference type="GO" id="GO:0031966">
    <property type="term" value="C:mitochondrial membrane"/>
    <property type="evidence" value="ECO:0007669"/>
    <property type="project" value="UniProtKB-SubCell"/>
</dbReference>
<dbReference type="GO" id="GO:0005739">
    <property type="term" value="C:mitochondrion"/>
    <property type="evidence" value="ECO:0007005"/>
    <property type="project" value="FlyBase"/>
</dbReference>
<dbReference type="GO" id="GO:0045259">
    <property type="term" value="C:proton-transporting ATP synthase complex"/>
    <property type="evidence" value="ECO:0000250"/>
    <property type="project" value="FlyBase"/>
</dbReference>
<dbReference type="GO" id="GO:0042776">
    <property type="term" value="P:proton motive force-driven mitochondrial ATP synthesis"/>
    <property type="evidence" value="ECO:0000318"/>
    <property type="project" value="GO_Central"/>
</dbReference>
<dbReference type="GO" id="GO:1902600">
    <property type="term" value="P:proton transmembrane transport"/>
    <property type="evidence" value="ECO:0000250"/>
    <property type="project" value="FlyBase"/>
</dbReference>
<dbReference type="InterPro" id="IPR019344">
    <property type="entry name" value="F1F0-ATPsyn_F_prd"/>
</dbReference>
<dbReference type="PANTHER" id="PTHR13080">
    <property type="entry name" value="ATP SYNTHASE F CHAIN, MITOCHONDRIAL-RELATED"/>
    <property type="match status" value="1"/>
</dbReference>
<dbReference type="PANTHER" id="PTHR13080:SF20">
    <property type="entry name" value="ATP SYNTHASE SUBUNIT F, MITOCHONDRIAL-RELATED"/>
    <property type="match status" value="1"/>
</dbReference>
<dbReference type="Pfam" id="PF10206">
    <property type="entry name" value="WRW"/>
    <property type="match status" value="1"/>
</dbReference>
<comment type="function">
    <text evidence="1">Mitochondrial membrane ATP synthase (F(1)F(0) ATP synthase or Complex V) produces ATP from ADP in the presence of a proton gradient across the membrane which is generated by electron transport complexes of the respiratory chain. F-type ATPases consist of two structural domains, F(1) - containing the extramembraneous catalytic core and F(0) - containing the membrane proton channel, linked together by a central stalk and a peripheral stalk. During catalysis, ATP synthesis in the catalytic domain of F(1) is coupled via a rotary mechanism of the central stalk subunits to proton translocation. Part of the complex F(0) domain. Minor subunit located with subunit a in the membrane (By similarity).</text>
</comment>
<comment type="subunit">
    <text evidence="1">F-type ATPases have 2 components, CF(1) - the catalytic core - and CF(0) - the membrane proton channel. CF(0) seems to have nine subunits: a, b, c, d, e, f, g, F6 and 8 (or A6L) (By similarity).</text>
</comment>
<comment type="subcellular location">
    <subcellularLocation>
        <location evidence="1">Mitochondrion membrane</location>
    </subcellularLocation>
</comment>
<comment type="alternative products">
    <event type="alternative splicing"/>
    <isoform>
        <id>Q9W141-1</id>
        <name>A</name>
        <sequence type="displayed"/>
    </isoform>
    <isoform>
        <id>Q9W141-2</id>
        <name>B</name>
        <sequence type="described" ref="VSP_026521"/>
    </isoform>
</comment>
<comment type="similarity">
    <text evidence="3">Belongs to the ATPase F chain family.</text>
</comment>
<comment type="sequence caution" evidence="3">
    <conflict type="erroneous initiation">
        <sequence resource="EMBL-CDS" id="ABF85708"/>
    </conflict>
</comment>